<dbReference type="EC" id="4.1.2.4" evidence="1"/>
<dbReference type="EMBL" id="CP000738">
    <property type="protein sequence ID" value="ABR61301.1"/>
    <property type="molecule type" value="Genomic_DNA"/>
</dbReference>
<dbReference type="RefSeq" id="WP_012066692.1">
    <property type="nucleotide sequence ID" value="NC_009636.1"/>
</dbReference>
<dbReference type="RefSeq" id="YP_001328136.1">
    <property type="nucleotide sequence ID" value="NC_009636.1"/>
</dbReference>
<dbReference type="SMR" id="A6UCC1"/>
<dbReference type="STRING" id="366394.Smed_2469"/>
<dbReference type="GeneID" id="61611291"/>
<dbReference type="KEGG" id="smd:Smed_2469"/>
<dbReference type="PATRIC" id="fig|366394.8.peg.5655"/>
<dbReference type="eggNOG" id="COG0274">
    <property type="taxonomic scope" value="Bacteria"/>
</dbReference>
<dbReference type="HOGENOM" id="CLU_053595_0_2_5"/>
<dbReference type="OrthoDB" id="6579831at2"/>
<dbReference type="UniPathway" id="UPA00002">
    <property type="reaction ID" value="UER00468"/>
</dbReference>
<dbReference type="Proteomes" id="UP000001108">
    <property type="component" value="Chromosome"/>
</dbReference>
<dbReference type="GO" id="GO:0005737">
    <property type="term" value="C:cytoplasm"/>
    <property type="evidence" value="ECO:0007669"/>
    <property type="project" value="UniProtKB-SubCell"/>
</dbReference>
<dbReference type="GO" id="GO:0004139">
    <property type="term" value="F:deoxyribose-phosphate aldolase activity"/>
    <property type="evidence" value="ECO:0007669"/>
    <property type="project" value="UniProtKB-UniRule"/>
</dbReference>
<dbReference type="GO" id="GO:0006018">
    <property type="term" value="P:2-deoxyribose 1-phosphate catabolic process"/>
    <property type="evidence" value="ECO:0007669"/>
    <property type="project" value="UniProtKB-UniRule"/>
</dbReference>
<dbReference type="GO" id="GO:0016052">
    <property type="term" value="P:carbohydrate catabolic process"/>
    <property type="evidence" value="ECO:0007669"/>
    <property type="project" value="TreeGrafter"/>
</dbReference>
<dbReference type="GO" id="GO:0009264">
    <property type="term" value="P:deoxyribonucleotide catabolic process"/>
    <property type="evidence" value="ECO:0007669"/>
    <property type="project" value="InterPro"/>
</dbReference>
<dbReference type="CDD" id="cd00959">
    <property type="entry name" value="DeoC"/>
    <property type="match status" value="1"/>
</dbReference>
<dbReference type="Gene3D" id="3.20.20.70">
    <property type="entry name" value="Aldolase class I"/>
    <property type="match status" value="1"/>
</dbReference>
<dbReference type="HAMAP" id="MF_00114">
    <property type="entry name" value="DeoC_type1"/>
    <property type="match status" value="1"/>
</dbReference>
<dbReference type="InterPro" id="IPR013785">
    <property type="entry name" value="Aldolase_TIM"/>
</dbReference>
<dbReference type="InterPro" id="IPR011343">
    <property type="entry name" value="DeoC"/>
</dbReference>
<dbReference type="InterPro" id="IPR002915">
    <property type="entry name" value="DeoC/FbaB/LacD_aldolase"/>
</dbReference>
<dbReference type="InterPro" id="IPR028581">
    <property type="entry name" value="DeoC_typeI"/>
</dbReference>
<dbReference type="NCBIfam" id="TIGR00126">
    <property type="entry name" value="deoC"/>
    <property type="match status" value="1"/>
</dbReference>
<dbReference type="PANTHER" id="PTHR10889">
    <property type="entry name" value="DEOXYRIBOSE-PHOSPHATE ALDOLASE"/>
    <property type="match status" value="1"/>
</dbReference>
<dbReference type="PANTHER" id="PTHR10889:SF1">
    <property type="entry name" value="DEOXYRIBOSE-PHOSPHATE ALDOLASE"/>
    <property type="match status" value="1"/>
</dbReference>
<dbReference type="Pfam" id="PF01791">
    <property type="entry name" value="DeoC"/>
    <property type="match status" value="1"/>
</dbReference>
<dbReference type="PIRSF" id="PIRSF001357">
    <property type="entry name" value="DeoC"/>
    <property type="match status" value="1"/>
</dbReference>
<dbReference type="SMART" id="SM01133">
    <property type="entry name" value="DeoC"/>
    <property type="match status" value="1"/>
</dbReference>
<dbReference type="SUPFAM" id="SSF51569">
    <property type="entry name" value="Aldolase"/>
    <property type="match status" value="1"/>
</dbReference>
<organism>
    <name type="scientific">Sinorhizobium medicae (strain WSM419)</name>
    <name type="common">Ensifer medicae</name>
    <dbReference type="NCBI Taxonomy" id="366394"/>
    <lineage>
        <taxon>Bacteria</taxon>
        <taxon>Pseudomonadati</taxon>
        <taxon>Pseudomonadota</taxon>
        <taxon>Alphaproteobacteria</taxon>
        <taxon>Hyphomicrobiales</taxon>
        <taxon>Rhizobiaceae</taxon>
        <taxon>Sinorhizobium/Ensifer group</taxon>
        <taxon>Sinorhizobium</taxon>
    </lineage>
</organism>
<evidence type="ECO:0000255" key="1">
    <source>
        <dbReference type="HAMAP-Rule" id="MF_00114"/>
    </source>
</evidence>
<gene>
    <name evidence="1" type="primary">deoC</name>
    <name type="ordered locus">Smed_2469</name>
</gene>
<accession>A6UCC1</accession>
<sequence length="248" mass="25860">MNDNRHRSKPPASLAPRDLAALIDISAVQAFHTEADVRELAEIAVAEGFIAAHALPNFVPLLRSLVPPGGPTLVGGPVGFPSGGHTTRMKIAEASELAEGGAQELDMMINVGRLKSGDIGYVRSEIRAVVEAIAPVPLKVILELAHLTDEEIRTASAIVAESGAAFVKTGTGWTPSATTLERLKLIAVTVEGAVEIKAAGGIRSLDAIAEMLRLGVTRFGINTQVAVDLVRQCAALPGSRLDIAGKAD</sequence>
<reference key="1">
    <citation type="submission" date="2007-06" db="EMBL/GenBank/DDBJ databases">
        <title>Complete sequence of Sinorhizobium medicae WSM419 chromosome.</title>
        <authorList>
            <consortium name="US DOE Joint Genome Institute"/>
            <person name="Copeland A."/>
            <person name="Lucas S."/>
            <person name="Lapidus A."/>
            <person name="Barry K."/>
            <person name="Glavina del Rio T."/>
            <person name="Dalin E."/>
            <person name="Tice H."/>
            <person name="Pitluck S."/>
            <person name="Chain P."/>
            <person name="Malfatti S."/>
            <person name="Shin M."/>
            <person name="Vergez L."/>
            <person name="Schmutz J."/>
            <person name="Larimer F."/>
            <person name="Land M."/>
            <person name="Hauser L."/>
            <person name="Kyrpides N."/>
            <person name="Mikhailova N."/>
            <person name="Reeve W.G."/>
            <person name="Richardson P."/>
        </authorList>
    </citation>
    <scope>NUCLEOTIDE SEQUENCE [LARGE SCALE GENOMIC DNA]</scope>
    <source>
        <strain>WSM419</strain>
    </source>
</reference>
<protein>
    <recommendedName>
        <fullName evidence="1">Deoxyribose-phosphate aldolase</fullName>
        <shortName evidence="1">DERA</shortName>
        <ecNumber evidence="1">4.1.2.4</ecNumber>
    </recommendedName>
    <alternativeName>
        <fullName evidence="1">2-deoxy-D-ribose 5-phosphate aldolase</fullName>
    </alternativeName>
    <alternativeName>
        <fullName evidence="1">Phosphodeoxyriboaldolase</fullName>
        <shortName evidence="1">Deoxyriboaldolase</shortName>
    </alternativeName>
</protein>
<feature type="chain" id="PRO_1000015329" description="Deoxyribose-phosphate aldolase">
    <location>
        <begin position="1"/>
        <end position="248"/>
    </location>
</feature>
<feature type="active site" description="Proton donor/acceptor" evidence="1">
    <location>
        <position position="106"/>
    </location>
</feature>
<feature type="active site" description="Schiff-base intermediate with acetaldehyde" evidence="1">
    <location>
        <position position="168"/>
    </location>
</feature>
<feature type="active site" description="Proton donor/acceptor" evidence="1">
    <location>
        <position position="197"/>
    </location>
</feature>
<keyword id="KW-0963">Cytoplasm</keyword>
<keyword id="KW-0456">Lyase</keyword>
<keyword id="KW-0704">Schiff base</keyword>
<name>DEOC_SINMW</name>
<comment type="function">
    <text evidence="1">Catalyzes a reversible aldol reaction between acetaldehyde and D-glyceraldehyde 3-phosphate to generate 2-deoxy-D-ribose 5-phosphate.</text>
</comment>
<comment type="catalytic activity">
    <reaction evidence="1">
        <text>2-deoxy-D-ribose 5-phosphate = D-glyceraldehyde 3-phosphate + acetaldehyde</text>
        <dbReference type="Rhea" id="RHEA:12821"/>
        <dbReference type="ChEBI" id="CHEBI:15343"/>
        <dbReference type="ChEBI" id="CHEBI:59776"/>
        <dbReference type="ChEBI" id="CHEBI:62877"/>
        <dbReference type="EC" id="4.1.2.4"/>
    </reaction>
</comment>
<comment type="pathway">
    <text evidence="1">Carbohydrate degradation; 2-deoxy-D-ribose 1-phosphate degradation; D-glyceraldehyde 3-phosphate and acetaldehyde from 2-deoxy-alpha-D-ribose 1-phosphate: step 2/2.</text>
</comment>
<comment type="subcellular location">
    <subcellularLocation>
        <location evidence="1">Cytoplasm</location>
    </subcellularLocation>
</comment>
<comment type="similarity">
    <text evidence="1">Belongs to the DeoC/FbaB aldolase family. DeoC type 1 subfamily.</text>
</comment>
<proteinExistence type="inferred from homology"/>